<evidence type="ECO:0000255" key="1">
    <source>
        <dbReference type="HAMAP-Rule" id="MF_01625"/>
    </source>
</evidence>
<evidence type="ECO:0000305" key="2"/>
<name>RAVA_YERPA</name>
<dbReference type="EC" id="3.6.1.-" evidence="1"/>
<dbReference type="EMBL" id="CP000308">
    <property type="protein sequence ID" value="ABG11974.1"/>
    <property type="molecule type" value="Genomic_DNA"/>
</dbReference>
<dbReference type="SMR" id="Q1CC48"/>
<dbReference type="KEGG" id="ypa:YPA_0005"/>
<dbReference type="Proteomes" id="UP000001971">
    <property type="component" value="Chromosome"/>
</dbReference>
<dbReference type="GO" id="GO:0005737">
    <property type="term" value="C:cytoplasm"/>
    <property type="evidence" value="ECO:0007669"/>
    <property type="project" value="UniProtKB-SubCell"/>
</dbReference>
<dbReference type="GO" id="GO:0005524">
    <property type="term" value="F:ATP binding"/>
    <property type="evidence" value="ECO:0007669"/>
    <property type="project" value="UniProtKB-KW"/>
</dbReference>
<dbReference type="GO" id="GO:0016887">
    <property type="term" value="F:ATP hydrolysis activity"/>
    <property type="evidence" value="ECO:0007669"/>
    <property type="project" value="InterPro"/>
</dbReference>
<dbReference type="CDD" id="cd00009">
    <property type="entry name" value="AAA"/>
    <property type="match status" value="1"/>
</dbReference>
<dbReference type="Gene3D" id="1.20.58.1510">
    <property type="match status" value="1"/>
</dbReference>
<dbReference type="Gene3D" id="2.40.128.430">
    <property type="match status" value="1"/>
</dbReference>
<dbReference type="Gene3D" id="3.40.50.300">
    <property type="entry name" value="P-loop containing nucleotide triphosphate hydrolases"/>
    <property type="match status" value="1"/>
</dbReference>
<dbReference type="InterPro" id="IPR003593">
    <property type="entry name" value="AAA+_ATPase"/>
</dbReference>
<dbReference type="InterPro" id="IPR022547">
    <property type="entry name" value="ATPase_RavA_C"/>
</dbReference>
<dbReference type="InterPro" id="IPR045427">
    <property type="entry name" value="MoxR"/>
</dbReference>
<dbReference type="InterPro" id="IPR027417">
    <property type="entry name" value="P-loop_NTPase"/>
</dbReference>
<dbReference type="InterPro" id="IPR041538">
    <property type="entry name" value="RavA-like_AAA_lid"/>
</dbReference>
<dbReference type="InterPro" id="IPR050513">
    <property type="entry name" value="RavA_ATPases"/>
</dbReference>
<dbReference type="InterPro" id="IPR046898">
    <property type="entry name" value="RavA_LARA_dom"/>
</dbReference>
<dbReference type="InterPro" id="IPR046932">
    <property type="entry name" value="RavA_LARA_sf"/>
</dbReference>
<dbReference type="NCBIfam" id="NF010054">
    <property type="entry name" value="PRK13531.1"/>
    <property type="match status" value="1"/>
</dbReference>
<dbReference type="PANTHER" id="PTHR32204">
    <property type="entry name" value="ATPASE RAVA"/>
    <property type="match status" value="1"/>
</dbReference>
<dbReference type="PANTHER" id="PTHR32204:SF0">
    <property type="entry name" value="ATPASE RAVA"/>
    <property type="match status" value="1"/>
</dbReference>
<dbReference type="Pfam" id="PF17868">
    <property type="entry name" value="AAA_lid_8"/>
    <property type="match status" value="1"/>
</dbReference>
<dbReference type="Pfam" id="PF12592">
    <property type="entry name" value="ATPase_RavA_C"/>
    <property type="match status" value="1"/>
</dbReference>
<dbReference type="Pfam" id="PF20030">
    <property type="entry name" value="bpMoxR"/>
    <property type="match status" value="1"/>
</dbReference>
<dbReference type="Pfam" id="PF20265">
    <property type="entry name" value="LARA_dom"/>
    <property type="match status" value="1"/>
</dbReference>
<dbReference type="SMART" id="SM00382">
    <property type="entry name" value="AAA"/>
    <property type="match status" value="1"/>
</dbReference>
<dbReference type="SUPFAM" id="SSF52540">
    <property type="entry name" value="P-loop containing nucleoside triphosphate hydrolases"/>
    <property type="match status" value="1"/>
</dbReference>
<proteinExistence type="inferred from homology"/>
<protein>
    <recommendedName>
        <fullName evidence="1">Regulatory ATPase RavA</fullName>
        <ecNumber evidence="1">3.6.1.-</ecNumber>
    </recommendedName>
    <alternativeName>
        <fullName evidence="1">Regulatory ATPase variant A</fullName>
    </alternativeName>
</protein>
<organism>
    <name type="scientific">Yersinia pestis bv. Antiqua (strain Antiqua)</name>
    <dbReference type="NCBI Taxonomy" id="360102"/>
    <lineage>
        <taxon>Bacteria</taxon>
        <taxon>Pseudomonadati</taxon>
        <taxon>Pseudomonadota</taxon>
        <taxon>Gammaproteobacteria</taxon>
        <taxon>Enterobacterales</taxon>
        <taxon>Yersiniaceae</taxon>
        <taxon>Yersinia</taxon>
    </lineage>
</organism>
<sequence length="495" mass="56994">MHRSLHIRLCLLAALSGESVFLLGPPGIAKSLIARRLKFAFRHARAFEYLMTRFSTPEEVFGPLSIQALKEEGRYQRMTGGYLPEAEIVFLDEIWKAGPAILNTLLTAINERRFRNGDREDSIPMRLLVTASNELPDADSSLEALYDRMLIRLWLDRVQEKQNFRSLLISRQNENHNPVAENLSITDEEFHQWQPLIDKITLPDHCFELIFQLRQRLSALEHAPYVSDRRWKKALRLLQASAFFSGRDEITPIDLILLKDCLWHDLNSFKLLQQQLEQLLTEQGYQQQSLLMKLQDINSKWLQHQQQQSDHQALTVVKQSGMFSRKAQYALPDNLTDSTLTLLLQKPLNLHDIQVNHLQVDKEALAQWLNKGGALRAKLNGVGYAQSIDAEIDDQLHIIILDVSRQPSTLSLPGATTTSVPPELLLALTKLESTLAEQRRLFSQHQPCLFTPSSWLAKIEASLLQVVEQLQFQQIQFQQIQFQQRKFQQQKHSGH</sequence>
<reference key="1">
    <citation type="journal article" date="2006" name="J. Bacteriol.">
        <title>Complete genome sequence of Yersinia pestis strains Antiqua and Nepal516: evidence of gene reduction in an emerging pathogen.</title>
        <authorList>
            <person name="Chain P.S.G."/>
            <person name="Hu P."/>
            <person name="Malfatti S.A."/>
            <person name="Radnedge L."/>
            <person name="Larimer F."/>
            <person name="Vergez L.M."/>
            <person name="Worsham P."/>
            <person name="Chu M.C."/>
            <person name="Andersen G.L."/>
        </authorList>
    </citation>
    <scope>NUCLEOTIDE SEQUENCE [LARGE SCALE GENOMIC DNA]</scope>
    <source>
        <strain>Antiqua</strain>
    </source>
</reference>
<accession>Q1CC48</accession>
<comment type="function">
    <text evidence="1">Component of the RavA-ViaA chaperone complex, which may act on the membrane to optimize the function of some of the respiratory chains. RavA functions as an ATPase.</text>
</comment>
<comment type="catalytic activity">
    <reaction evidence="1">
        <text>ATP + H2O = ADP + phosphate + H(+)</text>
        <dbReference type="Rhea" id="RHEA:13065"/>
        <dbReference type="ChEBI" id="CHEBI:15377"/>
        <dbReference type="ChEBI" id="CHEBI:15378"/>
        <dbReference type="ChEBI" id="CHEBI:30616"/>
        <dbReference type="ChEBI" id="CHEBI:43474"/>
        <dbReference type="ChEBI" id="CHEBI:456216"/>
    </reaction>
</comment>
<comment type="activity regulation">
    <text evidence="1">ATPase activity is stimulated by ViaA.</text>
</comment>
<comment type="subunit">
    <text evidence="1">Homohexamer. Interacts with ViaA.</text>
</comment>
<comment type="subcellular location">
    <subcellularLocation>
        <location evidence="1">Cytoplasm</location>
    </subcellularLocation>
</comment>
<comment type="similarity">
    <text evidence="1 2">Belongs to the RavA family.</text>
</comment>
<gene>
    <name evidence="1" type="primary">ravA</name>
    <name type="ordered locus">YPA_0005</name>
</gene>
<feature type="chain" id="PRO_0000292354" description="Regulatory ATPase RavA">
    <location>
        <begin position="1"/>
        <end position="495"/>
    </location>
</feature>
<feature type="binding site" evidence="1">
    <location>
        <position position="27"/>
    </location>
    <ligand>
        <name>ADP</name>
        <dbReference type="ChEBI" id="CHEBI:456216"/>
    </ligand>
</feature>
<feature type="binding site" evidence="1">
    <location>
        <position position="28"/>
    </location>
    <ligand>
        <name>ADP</name>
        <dbReference type="ChEBI" id="CHEBI:456216"/>
    </ligand>
</feature>
<feature type="binding site" evidence="1">
    <location>
        <position position="29"/>
    </location>
    <ligand>
        <name>ADP</name>
        <dbReference type="ChEBI" id="CHEBI:456216"/>
    </ligand>
</feature>
<feature type="binding site" evidence="1">
    <location>
        <position position="30"/>
    </location>
    <ligand>
        <name>ADP</name>
        <dbReference type="ChEBI" id="CHEBI:456216"/>
    </ligand>
</feature>
<feature type="binding site" evidence="1">
    <location>
        <position position="31"/>
    </location>
    <ligand>
        <name>ADP</name>
        <dbReference type="ChEBI" id="CHEBI:456216"/>
    </ligand>
</feature>
<feature type="binding site" evidence="1">
    <location>
        <position position="32"/>
    </location>
    <ligand>
        <name>ADP</name>
        <dbReference type="ChEBI" id="CHEBI:456216"/>
    </ligand>
</feature>
<feature type="binding site" evidence="1">
    <location>
        <position position="174"/>
    </location>
    <ligand>
        <name>ADP</name>
        <dbReference type="ChEBI" id="CHEBI:456216"/>
    </ligand>
</feature>
<keyword id="KW-0067">ATP-binding</keyword>
<keyword id="KW-0143">Chaperone</keyword>
<keyword id="KW-0963">Cytoplasm</keyword>
<keyword id="KW-0378">Hydrolase</keyword>
<keyword id="KW-0547">Nucleotide-binding</keyword>